<dbReference type="EMBL" id="FM178379">
    <property type="protein sequence ID" value="CAQ78021.1"/>
    <property type="molecule type" value="Genomic_DNA"/>
</dbReference>
<dbReference type="RefSeq" id="WP_012549165.1">
    <property type="nucleotide sequence ID" value="NC_011312.1"/>
</dbReference>
<dbReference type="SMR" id="B6EPU1"/>
<dbReference type="KEGG" id="vsa:VSAL_I0336"/>
<dbReference type="eggNOG" id="COG0256">
    <property type="taxonomic scope" value="Bacteria"/>
</dbReference>
<dbReference type="HOGENOM" id="CLU_098841_0_1_6"/>
<dbReference type="Proteomes" id="UP000001730">
    <property type="component" value="Chromosome 1"/>
</dbReference>
<dbReference type="GO" id="GO:0022625">
    <property type="term" value="C:cytosolic large ribosomal subunit"/>
    <property type="evidence" value="ECO:0007669"/>
    <property type="project" value="TreeGrafter"/>
</dbReference>
<dbReference type="GO" id="GO:0008097">
    <property type="term" value="F:5S rRNA binding"/>
    <property type="evidence" value="ECO:0007669"/>
    <property type="project" value="TreeGrafter"/>
</dbReference>
<dbReference type="GO" id="GO:0003735">
    <property type="term" value="F:structural constituent of ribosome"/>
    <property type="evidence" value="ECO:0007669"/>
    <property type="project" value="InterPro"/>
</dbReference>
<dbReference type="GO" id="GO:0006412">
    <property type="term" value="P:translation"/>
    <property type="evidence" value="ECO:0007669"/>
    <property type="project" value="UniProtKB-UniRule"/>
</dbReference>
<dbReference type="CDD" id="cd00432">
    <property type="entry name" value="Ribosomal_L18_L5e"/>
    <property type="match status" value="1"/>
</dbReference>
<dbReference type="FunFam" id="3.30.420.100:FF:000001">
    <property type="entry name" value="50S ribosomal protein L18"/>
    <property type="match status" value="1"/>
</dbReference>
<dbReference type="Gene3D" id="3.30.420.100">
    <property type="match status" value="1"/>
</dbReference>
<dbReference type="HAMAP" id="MF_01337_B">
    <property type="entry name" value="Ribosomal_uL18_B"/>
    <property type="match status" value="1"/>
</dbReference>
<dbReference type="InterPro" id="IPR004389">
    <property type="entry name" value="Ribosomal_uL18_bac-type"/>
</dbReference>
<dbReference type="InterPro" id="IPR005484">
    <property type="entry name" value="Ribosomal_uL18_bac/euk"/>
</dbReference>
<dbReference type="NCBIfam" id="TIGR00060">
    <property type="entry name" value="L18_bact"/>
    <property type="match status" value="1"/>
</dbReference>
<dbReference type="PANTHER" id="PTHR12899">
    <property type="entry name" value="39S RIBOSOMAL PROTEIN L18, MITOCHONDRIAL"/>
    <property type="match status" value="1"/>
</dbReference>
<dbReference type="PANTHER" id="PTHR12899:SF3">
    <property type="entry name" value="LARGE RIBOSOMAL SUBUNIT PROTEIN UL18M"/>
    <property type="match status" value="1"/>
</dbReference>
<dbReference type="Pfam" id="PF00861">
    <property type="entry name" value="Ribosomal_L18p"/>
    <property type="match status" value="1"/>
</dbReference>
<dbReference type="SUPFAM" id="SSF53137">
    <property type="entry name" value="Translational machinery components"/>
    <property type="match status" value="1"/>
</dbReference>
<proteinExistence type="inferred from homology"/>
<reference key="1">
    <citation type="journal article" date="2008" name="BMC Genomics">
        <title>The genome sequence of the fish pathogen Aliivibrio salmonicida strain LFI1238 shows extensive evidence of gene decay.</title>
        <authorList>
            <person name="Hjerde E."/>
            <person name="Lorentzen M.S."/>
            <person name="Holden M.T."/>
            <person name="Seeger K."/>
            <person name="Paulsen S."/>
            <person name="Bason N."/>
            <person name="Churcher C."/>
            <person name="Harris D."/>
            <person name="Norbertczak H."/>
            <person name="Quail M.A."/>
            <person name="Sanders S."/>
            <person name="Thurston S."/>
            <person name="Parkhill J."/>
            <person name="Willassen N.P."/>
            <person name="Thomson N.R."/>
        </authorList>
    </citation>
    <scope>NUCLEOTIDE SEQUENCE [LARGE SCALE GENOMIC DNA]</scope>
    <source>
        <strain>LFI1238</strain>
    </source>
</reference>
<feature type="chain" id="PRO_1000142613" description="Large ribosomal subunit protein uL18">
    <location>
        <begin position="1"/>
        <end position="117"/>
    </location>
</feature>
<gene>
    <name evidence="1" type="primary">rplR</name>
    <name type="ordered locus">VSAL_I0336</name>
</gene>
<protein>
    <recommendedName>
        <fullName evidence="1">Large ribosomal subunit protein uL18</fullName>
    </recommendedName>
    <alternativeName>
        <fullName evidence="2">50S ribosomal protein L18</fullName>
    </alternativeName>
</protein>
<evidence type="ECO:0000255" key="1">
    <source>
        <dbReference type="HAMAP-Rule" id="MF_01337"/>
    </source>
</evidence>
<evidence type="ECO:0000305" key="2"/>
<name>RL18_ALISL</name>
<sequence>MDKKASRIRRATRARRKIAELCATRLVVHRTPRHTYAQVIAPNGSEVIAAASTVEKAIREQVGNTSNKAAAVAIGKLIAERAIEKGITNVAFDRSGFQYHGRVAALADSAREAGLKF</sequence>
<organism>
    <name type="scientific">Aliivibrio salmonicida (strain LFI1238)</name>
    <name type="common">Vibrio salmonicida (strain LFI1238)</name>
    <dbReference type="NCBI Taxonomy" id="316275"/>
    <lineage>
        <taxon>Bacteria</taxon>
        <taxon>Pseudomonadati</taxon>
        <taxon>Pseudomonadota</taxon>
        <taxon>Gammaproteobacteria</taxon>
        <taxon>Vibrionales</taxon>
        <taxon>Vibrionaceae</taxon>
        <taxon>Aliivibrio</taxon>
    </lineage>
</organism>
<accession>B6EPU1</accession>
<comment type="function">
    <text evidence="1">This is one of the proteins that bind and probably mediate the attachment of the 5S RNA into the large ribosomal subunit, where it forms part of the central protuberance.</text>
</comment>
<comment type="subunit">
    <text evidence="1">Part of the 50S ribosomal subunit; part of the 5S rRNA/L5/L18/L25 subcomplex. Contacts the 5S and 23S rRNAs.</text>
</comment>
<comment type="similarity">
    <text evidence="1">Belongs to the universal ribosomal protein uL18 family.</text>
</comment>
<keyword id="KW-0687">Ribonucleoprotein</keyword>
<keyword id="KW-0689">Ribosomal protein</keyword>
<keyword id="KW-0694">RNA-binding</keyword>
<keyword id="KW-0699">rRNA-binding</keyword>